<comment type="function">
    <text evidence="5 6 7 8 9 11 14 15 16 19 21 23 24 25 26 27 28">Serine/threonine kinase which is involved in the regulation of apoptosis, autophagy, transcription, translation and actin cytoskeleton reorganization. Involved in the regulation of smooth muscle contraction. Regulates both type I (caspase-dependent) apoptotic and type II (caspase-independent) autophagic cell deaths signal, depending on the cellular setting. Involved in regulation of starvation-induced autophagy. Regulates myosin phosphorylation in both smooth muscle and non-muscle cells. In smooth muscle, regulates myosin either directly by phosphorylating MYL12B and MYL9 or through inhibition of smooth muscle myosin phosphatase (SMPP1M) via phosphorylation of PPP1R12A; the inhibition of SMPP1M functions to enhance muscle responsiveness to Ca(2+) and promote a contractile state. Phosphorylates MYL12B in non-muscle cells leading to reorganization of actin cytoskeleton. Isoform 2 can phosphorylate myosin, PPP1R12A and MYL12B. Overexpression leads to condensation of actin stress fibers into thick bundles. Involved in actin filament focal adhesion dynamics. The function in both reorganization of actin cytoskeleton and focal adhesion dissolution is modulated by RhoD. Positively regulates canonical Wnt/beta-catenin signaling through interaction with NLK and TCF7L2. Phosphorylates RPL13A on 'Ser-77' upon interferon-gamma activation which is causing RPL13A release from the ribosome, RPL13A association with the GAIT complex and its subsequent involvement in transcript-selective translation inhibition. Enhances transcription from AR-responsive promoters in a hormone- and kinase-dependent manner. Involved in regulation of cell cycle progression and cell proliferation. May be a tumor suppressor.</text>
</comment>
<comment type="catalytic activity">
    <reaction evidence="5 6 7 9 15 21">
        <text>L-seryl-[protein] + ATP = O-phospho-L-seryl-[protein] + ADP + H(+)</text>
        <dbReference type="Rhea" id="RHEA:17989"/>
        <dbReference type="Rhea" id="RHEA-COMP:9863"/>
        <dbReference type="Rhea" id="RHEA-COMP:11604"/>
        <dbReference type="ChEBI" id="CHEBI:15378"/>
        <dbReference type="ChEBI" id="CHEBI:29999"/>
        <dbReference type="ChEBI" id="CHEBI:30616"/>
        <dbReference type="ChEBI" id="CHEBI:83421"/>
        <dbReference type="ChEBI" id="CHEBI:456216"/>
        <dbReference type="EC" id="2.7.11.1"/>
    </reaction>
</comment>
<comment type="catalytic activity">
    <reaction evidence="5 6 7 9 15 21">
        <text>L-threonyl-[protein] + ATP = O-phospho-L-threonyl-[protein] + ADP + H(+)</text>
        <dbReference type="Rhea" id="RHEA:46608"/>
        <dbReference type="Rhea" id="RHEA-COMP:11060"/>
        <dbReference type="Rhea" id="RHEA-COMP:11605"/>
        <dbReference type="ChEBI" id="CHEBI:15378"/>
        <dbReference type="ChEBI" id="CHEBI:30013"/>
        <dbReference type="ChEBI" id="CHEBI:30616"/>
        <dbReference type="ChEBI" id="CHEBI:61977"/>
        <dbReference type="ChEBI" id="CHEBI:456216"/>
        <dbReference type="EC" id="2.7.11.1"/>
    </reaction>
</comment>
<comment type="cofactor">
    <cofactor evidence="5">
        <name>Mg(2+)</name>
        <dbReference type="ChEBI" id="CHEBI:18420"/>
    </cofactor>
</comment>
<comment type="activity regulation">
    <text evidence="12 16 20 30">A sequential activation is proposed: autophosphorylation at consensus sites is leading to dimerization of the catalytic domain stabilized by phosphorylation at Ser-50 and activation segment exchange (producing an active confirmation of both kinase modules in trans) followed by phosphorylation at Thr-180 in the activation segment and at other regulatory sites (Probable). Phosphorylation at Thr-180, Thr-225 and Thr-265 is essential for activity. Oligomerization is required for full enzymatic activity. Inhibited by pyridone-6 (K00225), a potent, ATP-competitive inhibitor.</text>
</comment>
<comment type="biophysicochemical properties">
    <kinetics>
        <KM evidence="15">12 uM for myosin (isoform 2)</KM>
        <KM evidence="15">6.2 uM for myosin (isoform 1)</KM>
        <KM evidence="15">73 uM for MYL12B (isoform 2)</KM>
        <KM evidence="15">10.4 uM for MYL12B (isoform 1)</KM>
        <Vmax evidence="15">248.0 nmol/min/mg enzyme toward myosin (isoform 2)</Vmax>
        <Vmax evidence="15">120.0 nmol/min/mg enzyme toward myosin (isoform 1)</Vmax>
        <Vmax evidence="15">1.3 umol/min/mg enzyme toward MYL12B (isoform 2)</Vmax>
        <Vmax evidence="15">271.0 nmol/min/mg enzyme toward MYL12B (isoform 1)</Vmax>
    </kinetics>
</comment>
<comment type="subunit">
    <text evidence="8 10 13 14 15 20 23 24 25 27 28 30">Homooligomer in its kinase-active form (homotrimers and homodimers are reported); monomeric in its kinase-inactive form. Homodimerization is required for activation segment autophosphorylation (Probable). Isoform 1 and isoform 2 interact with myosin and PPP1R12A; interaction of isoform 1 with PPP1R12A is inhibited by RhoA dominant negative form. Interacts with NLK, DAXX, STAT3, RHOD (GTP-bound form) and TCP10L. Interacts with PAWR; the interaction is reported conflictingly: according to PubMed:17953487 does not interact with PAWR. Interacts with ULK1; may be a substrate of ULK1. Interacts with LUZP1; the interaction is likely to occur throughout the cell cycle and reduces the LUZP1-mediated suppression of MYL9 phosphorylation (PubMed:38009294).</text>
</comment>
<comment type="interaction">
    <interactant intactId="EBI-77293">
        <id>O43293</id>
    </interactant>
    <interactant intactId="EBI-77293">
        <id>O43293</id>
        <label>DAPK3</label>
    </interactant>
    <organismsDiffer>false</organismsDiffer>
    <experiments>3</experiments>
</comment>
<comment type="interaction">
    <interactant intactId="EBI-77293">
        <id>O43293</id>
    </interactant>
    <interactant intactId="EBI-350467">
        <id>Q86V48</id>
        <label>LUZP1</label>
    </interactant>
    <organismsDiffer>false</organismsDiffer>
    <experiments>3</experiments>
</comment>
<comment type="interaction">
    <interactant intactId="EBI-77293">
        <id>O43293</id>
    </interactant>
    <interactant intactId="EBI-366978">
        <id>Q9UBE8</id>
        <label>NLK</label>
    </interactant>
    <organismsDiffer>false</organismsDiffer>
    <experiments>3</experiments>
</comment>
<comment type="interaction">
    <interactant intactId="EBI-77293">
        <id>O43293</id>
    </interactant>
    <interactant intactId="EBI-351726">
        <id>O14974</id>
        <label>PPP1R12A</label>
    </interactant>
    <organismsDiffer>false</organismsDiffer>
    <experiments>5</experiments>
</comment>
<comment type="interaction">
    <interactant intactId="EBI-77293">
        <id>O43293</id>
    </interactant>
    <interactant intactId="EBI-3923210">
        <id>Q8TDR4</id>
        <label>TCP10L</label>
    </interactant>
    <organismsDiffer>false</organismsDiffer>
    <experiments>5</experiments>
</comment>
<comment type="interaction">
    <interactant intactId="EBI-9691390">
        <id>O43293-2</id>
    </interactant>
    <interactant intactId="EBI-918263">
        <id>Q10728</id>
        <label>Ppp1r12a</label>
    </interactant>
    <organismsDiffer>true</organismsDiffer>
    <experiments>2</experiments>
</comment>
<comment type="subcellular location">
    <subcellularLocation>
        <location evidence="11 13 22">Nucleus</location>
    </subcellularLocation>
    <subcellularLocation>
        <location evidence="1">Nucleus</location>
        <location evidence="1">PML body</location>
    </subcellularLocation>
    <subcellularLocation>
        <location evidence="1">Cytoplasm</location>
        <location evidence="1">Cytoskeleton</location>
        <location evidence="1">Microtubule organizing center</location>
        <location evidence="1">Centrosome</location>
    </subcellularLocation>
    <subcellularLocation>
        <location evidence="28">Chromosome</location>
        <location evidence="28">Centromere</location>
    </subcellularLocation>
    <subcellularLocation>
        <location evidence="11 12 18 22">Cytoplasm</location>
    </subcellularLocation>
    <subcellularLocation>
        <location evidence="28">Cytoplasm</location>
        <location evidence="28">Cytoskeleton</location>
        <location evidence="28">Spindle</location>
    </subcellularLocation>
    <subcellularLocation>
        <location evidence="28">Midbody</location>
    </subcellularLocation>
    <text evidence="18 22">Predominantly localizes to the cytoplasm but can shuttle between the nucleus and cytoplasm; cytoplasmic localization is promoted by phosphorylation at Thr-299 and involves Rho/Rock signaling.</text>
</comment>
<comment type="subcellular location">
    <molecule>Isoform 1</molecule>
    <subcellularLocation>
        <location evidence="15">Nucleus</location>
    </subcellularLocation>
    <subcellularLocation>
        <location evidence="15">Cytoplasm</location>
    </subcellularLocation>
</comment>
<comment type="subcellular location">
    <molecule>Isoform 2</molecule>
    <subcellularLocation>
        <location evidence="15">Nucleus</location>
    </subcellularLocation>
    <subcellularLocation>
        <location evidence="15">Cytoplasm</location>
    </subcellularLocation>
</comment>
<comment type="alternative products">
    <event type="alternative splicing"/>
    <isoform>
        <id>O43293-1</id>
        <name>1</name>
        <name>ZIPK-L</name>
        <sequence type="displayed"/>
    </isoform>
    <isoform>
        <id>O43293-2</id>
        <name>2</name>
        <name>ZIPK-S</name>
        <sequence type="described" ref="VSP_042059 VSP_042060"/>
    </isoform>
</comment>
<comment type="tissue specificity">
    <text evidence="10 15">Widely expressed. Isoform 1 and isoform 2 are expressed in the bladder smooth muscle.</text>
</comment>
<comment type="PTM">
    <text evidence="11 12 16 22">The phosphorylation status is critical for kinase activity, oligomerization and intracellular localization. Phosphorylation at Thr-180, Thr-225 and Thr-265 is essential for activity. The phosphorylated form is localized in the cytoplasm promoted by phosphorylation at Thr-299; nuclear translocation or retention is maximal when it is not phosphorylated. Phosphorylation increases the trimeric form, and its dephosphorylation favors a kinase-inactive monomeric form. Both isoform 1 and isoform 2 can undergo autophosphorylation.</text>
</comment>
<comment type="miscellaneous">
    <molecule>Isoform 2</molecule>
    <text evidence="32">The internal splice site between exon 8 and the 3' UTR, which yields this truncated isoform, is non-canonical.</text>
</comment>
<comment type="similarity">
    <text evidence="32">Belongs to the protein kinase superfamily. CAMK Ser/Thr protein kinase family. DAP kinase subfamily.</text>
</comment>
<name>DAPK3_HUMAN</name>
<proteinExistence type="evidence at protein level"/>
<organism>
    <name type="scientific">Homo sapiens</name>
    <name type="common">Human</name>
    <dbReference type="NCBI Taxonomy" id="9606"/>
    <lineage>
        <taxon>Eukaryota</taxon>
        <taxon>Metazoa</taxon>
        <taxon>Chordata</taxon>
        <taxon>Craniata</taxon>
        <taxon>Vertebrata</taxon>
        <taxon>Euteleostomi</taxon>
        <taxon>Mammalia</taxon>
        <taxon>Eutheria</taxon>
        <taxon>Euarchontoglires</taxon>
        <taxon>Primates</taxon>
        <taxon>Haplorrhini</taxon>
        <taxon>Catarrhini</taxon>
        <taxon>Hominidae</taxon>
        <taxon>Homo</taxon>
    </lineage>
</organism>
<accession>O43293</accession>
<accession>A0AVN4</accession>
<accession>B3KQE2</accession>
<accession>Q05JY4</accession>
<dbReference type="EC" id="2.7.11.1" evidence="5 6 7 9 15 21"/>
<dbReference type="EMBL" id="AB007144">
    <property type="protein sequence ID" value="BAA24955.1"/>
    <property type="molecule type" value="mRNA"/>
</dbReference>
<dbReference type="EMBL" id="AB022341">
    <property type="protein sequence ID" value="BAA81746.1"/>
    <property type="molecule type" value="mRNA"/>
</dbReference>
<dbReference type="EMBL" id="AK074799">
    <property type="protein sequence ID" value="BAG52004.1"/>
    <property type="molecule type" value="mRNA"/>
</dbReference>
<dbReference type="EMBL" id="BC126430">
    <property type="protein sequence ID" value="AAI26431.1"/>
    <property type="molecule type" value="mRNA"/>
</dbReference>
<dbReference type="EMBL" id="BC126432">
    <property type="protein sequence ID" value="AAI26433.1"/>
    <property type="molecule type" value="mRNA"/>
</dbReference>
<dbReference type="EMBL" id="AB265224">
    <property type="protein sequence ID" value="BAF34614.1"/>
    <property type="molecule type" value="mRNA"/>
</dbReference>
<dbReference type="CCDS" id="CCDS12116.1">
    <molecule id="O43293-1"/>
</dbReference>
<dbReference type="RefSeq" id="NP_001339.1">
    <molecule id="O43293-1"/>
    <property type="nucleotide sequence ID" value="NM_001348.3"/>
</dbReference>
<dbReference type="RefSeq" id="NP_001362587.1">
    <molecule id="O43293-1"/>
    <property type="nucleotide sequence ID" value="NM_001375658.1"/>
</dbReference>
<dbReference type="RefSeq" id="XP_005259565.1">
    <property type="nucleotide sequence ID" value="XM_005259508.1"/>
</dbReference>
<dbReference type="PDB" id="1YRP">
    <property type="method" value="X-ray"/>
    <property type="resolution" value="3.10 A"/>
    <property type="chains" value="A/B=1-277"/>
</dbReference>
<dbReference type="PDB" id="2J90">
    <property type="method" value="X-ray"/>
    <property type="resolution" value="2.00 A"/>
    <property type="chains" value="A/B=9-289"/>
</dbReference>
<dbReference type="PDB" id="3BHY">
    <property type="method" value="X-ray"/>
    <property type="resolution" value="1.24 A"/>
    <property type="chains" value="A=9-289"/>
</dbReference>
<dbReference type="PDB" id="3BQR">
    <property type="method" value="X-ray"/>
    <property type="resolution" value="1.75 A"/>
    <property type="chains" value="A=9-289"/>
</dbReference>
<dbReference type="PDB" id="5A6N">
    <property type="method" value="X-ray"/>
    <property type="resolution" value="1.70 A"/>
    <property type="chains" value="A/B=9-289"/>
</dbReference>
<dbReference type="PDB" id="5A6O">
    <property type="method" value="X-ray"/>
    <property type="resolution" value="1.60 A"/>
    <property type="chains" value="A/B=9-289"/>
</dbReference>
<dbReference type="PDB" id="5VJA">
    <property type="method" value="X-ray"/>
    <property type="resolution" value="2.46 A"/>
    <property type="chains" value="A/B/C/D=9-289"/>
</dbReference>
<dbReference type="PDBsum" id="1YRP"/>
<dbReference type="PDBsum" id="2J90"/>
<dbReference type="PDBsum" id="3BHY"/>
<dbReference type="PDBsum" id="3BQR"/>
<dbReference type="PDBsum" id="5A6N"/>
<dbReference type="PDBsum" id="5A6O"/>
<dbReference type="PDBsum" id="5VJA"/>
<dbReference type="SMR" id="O43293"/>
<dbReference type="BioGRID" id="107983">
    <property type="interactions" value="100"/>
</dbReference>
<dbReference type="FunCoup" id="O43293">
    <property type="interactions" value="2772"/>
</dbReference>
<dbReference type="IntAct" id="O43293">
    <property type="interactions" value="75"/>
</dbReference>
<dbReference type="MINT" id="O43293"/>
<dbReference type="STRING" id="9606.ENSP00000442973"/>
<dbReference type="BindingDB" id="O43293"/>
<dbReference type="ChEMBL" id="CHEMBL2468"/>
<dbReference type="DrugBank" id="DB07242">
    <property type="generic name" value="(4R)-7,8-dichloro-1',9-dimethyl-1-oxo-1,2,4,9-tetrahydrospiro[beta-carboline-3,4'-piperidine]-4-carbonitrile"/>
</dbReference>
<dbReference type="DrugBank" id="DB04716">
    <property type="generic name" value="2-tert-butyl-9-fluoro-1,6-dihydrobenzo[h]imidazo[4,5-f]isoquinolin-7-one"/>
</dbReference>
<dbReference type="DrugBank" id="DB07125">
    <property type="generic name" value="4-(6-{[(1R)-1-(hydroxymethyl)propyl]amino}imidazo[1,2-b]pyridazin-3-yl)benzoic acid"/>
</dbReference>
<dbReference type="DrugBank" id="DB12010">
    <property type="generic name" value="Fostamatinib"/>
</dbReference>
<dbReference type="DrugCentral" id="O43293"/>
<dbReference type="GuidetoPHARMACOLOGY" id="2004"/>
<dbReference type="GlyGen" id="O43293">
    <property type="glycosylation" value="1 site, 1 O-linked glycan (1 site)"/>
</dbReference>
<dbReference type="iPTMnet" id="O43293"/>
<dbReference type="PhosphoSitePlus" id="O43293"/>
<dbReference type="BioMuta" id="DAPK3"/>
<dbReference type="CPTAC" id="CPTAC-3091"/>
<dbReference type="CPTAC" id="CPTAC-3092"/>
<dbReference type="jPOST" id="O43293"/>
<dbReference type="MassIVE" id="O43293"/>
<dbReference type="PaxDb" id="9606-ENSP00000442973"/>
<dbReference type="PeptideAtlas" id="O43293"/>
<dbReference type="ProteomicsDB" id="48863">
    <molecule id="O43293-1"/>
</dbReference>
<dbReference type="ProteomicsDB" id="48864">
    <molecule id="O43293-2"/>
</dbReference>
<dbReference type="Pumba" id="O43293"/>
<dbReference type="Antibodypedia" id="11137">
    <property type="antibodies" value="418 antibodies from 43 providers"/>
</dbReference>
<dbReference type="DNASU" id="1613"/>
<dbReference type="Ensembl" id="ENST00000301264.7">
    <molecule id="O43293-1"/>
    <property type="protein sequence ID" value="ENSP00000301264.3"/>
    <property type="gene ID" value="ENSG00000167657.14"/>
</dbReference>
<dbReference type="Ensembl" id="ENST00000545797.7">
    <molecule id="O43293-1"/>
    <property type="protein sequence ID" value="ENSP00000442973.1"/>
    <property type="gene ID" value="ENSG00000167657.14"/>
</dbReference>
<dbReference type="GeneID" id="1613"/>
<dbReference type="KEGG" id="hsa:1613"/>
<dbReference type="MANE-Select" id="ENST00000545797.7">
    <property type="protein sequence ID" value="ENSP00000442973.1"/>
    <property type="RefSeq nucleotide sequence ID" value="NM_001348.3"/>
    <property type="RefSeq protein sequence ID" value="NP_001339.1"/>
</dbReference>
<dbReference type="UCSC" id="uc002lzc.2">
    <molecule id="O43293-1"/>
    <property type="organism name" value="human"/>
</dbReference>
<dbReference type="AGR" id="HGNC:2676"/>
<dbReference type="CTD" id="1613"/>
<dbReference type="DisGeNET" id="1613"/>
<dbReference type="GeneCards" id="DAPK3"/>
<dbReference type="HGNC" id="HGNC:2676">
    <property type="gene designation" value="DAPK3"/>
</dbReference>
<dbReference type="HPA" id="ENSG00000167657">
    <property type="expression patterns" value="Low tissue specificity"/>
</dbReference>
<dbReference type="MIM" id="603289">
    <property type="type" value="gene"/>
</dbReference>
<dbReference type="neXtProt" id="NX_O43293"/>
<dbReference type="OpenTargets" id="ENSG00000167657"/>
<dbReference type="PharmGKB" id="PA27144"/>
<dbReference type="VEuPathDB" id="HostDB:ENSG00000167657"/>
<dbReference type="eggNOG" id="KOG0032">
    <property type="taxonomic scope" value="Eukaryota"/>
</dbReference>
<dbReference type="GeneTree" id="ENSGT00940000161753"/>
<dbReference type="HOGENOM" id="CLU_000288_63_55_1"/>
<dbReference type="InParanoid" id="O43293"/>
<dbReference type="OMA" id="LWYKEEN"/>
<dbReference type="OrthoDB" id="74764at2759"/>
<dbReference type="PAN-GO" id="O43293">
    <property type="GO annotations" value="5 GO annotations based on evolutionary models"/>
</dbReference>
<dbReference type="PhylomeDB" id="O43293"/>
<dbReference type="TreeFam" id="TF314166"/>
<dbReference type="PathwayCommons" id="O43293"/>
<dbReference type="Reactome" id="R-HSA-418889">
    <property type="pathway name" value="Caspase activation via Dependence Receptors in the absence of ligand"/>
</dbReference>
<dbReference type="SABIO-RK" id="O43293"/>
<dbReference type="SignaLink" id="O43293"/>
<dbReference type="SIGNOR" id="O43293"/>
<dbReference type="BioGRID-ORCS" id="1613">
    <property type="hits" value="21 hits in 1190 CRISPR screens"/>
</dbReference>
<dbReference type="CD-CODE" id="8C2F96ED">
    <property type="entry name" value="Centrosome"/>
</dbReference>
<dbReference type="ChiTaRS" id="DAPK3">
    <property type="organism name" value="human"/>
</dbReference>
<dbReference type="EvolutionaryTrace" id="O43293"/>
<dbReference type="GeneWiki" id="DAPK3"/>
<dbReference type="GenomeRNAi" id="1613"/>
<dbReference type="Pharos" id="O43293">
    <property type="development level" value="Tchem"/>
</dbReference>
<dbReference type="PRO" id="PR:O43293"/>
<dbReference type="Proteomes" id="UP000005640">
    <property type="component" value="Chromosome 19"/>
</dbReference>
<dbReference type="RNAct" id="O43293">
    <property type="molecule type" value="protein"/>
</dbReference>
<dbReference type="Bgee" id="ENSG00000167657">
    <property type="expression patterns" value="Expressed in apex of heart and 188 other cell types or tissues"/>
</dbReference>
<dbReference type="ExpressionAtlas" id="O43293">
    <property type="expression patterns" value="baseline and differential"/>
</dbReference>
<dbReference type="GO" id="GO:0005813">
    <property type="term" value="C:centrosome"/>
    <property type="evidence" value="ECO:0007669"/>
    <property type="project" value="UniProtKB-SubCell"/>
</dbReference>
<dbReference type="GO" id="GO:0000775">
    <property type="term" value="C:chromosome, centromeric region"/>
    <property type="evidence" value="ECO:0000314"/>
    <property type="project" value="UniProtKB"/>
</dbReference>
<dbReference type="GO" id="GO:0005929">
    <property type="term" value="C:cilium"/>
    <property type="evidence" value="ECO:0000314"/>
    <property type="project" value="HPA"/>
</dbReference>
<dbReference type="GO" id="GO:0005737">
    <property type="term" value="C:cytoplasm"/>
    <property type="evidence" value="ECO:0000318"/>
    <property type="project" value="GO_Central"/>
</dbReference>
<dbReference type="GO" id="GO:0005829">
    <property type="term" value="C:cytosol"/>
    <property type="evidence" value="ECO:0000314"/>
    <property type="project" value="HPA"/>
</dbReference>
<dbReference type="GO" id="GO:0043231">
    <property type="term" value="C:intracellular membrane-bounded organelle"/>
    <property type="evidence" value="ECO:0000314"/>
    <property type="project" value="HPA"/>
</dbReference>
<dbReference type="GO" id="GO:0030496">
    <property type="term" value="C:midbody"/>
    <property type="evidence" value="ECO:0000314"/>
    <property type="project" value="UniProtKB"/>
</dbReference>
<dbReference type="GO" id="GO:0005654">
    <property type="term" value="C:nucleoplasm"/>
    <property type="evidence" value="ECO:0000314"/>
    <property type="project" value="HPA"/>
</dbReference>
<dbReference type="GO" id="GO:0005634">
    <property type="term" value="C:nucleus"/>
    <property type="evidence" value="ECO:0000250"/>
    <property type="project" value="UniProtKB"/>
</dbReference>
<dbReference type="GO" id="GO:0016605">
    <property type="term" value="C:PML body"/>
    <property type="evidence" value="ECO:0007669"/>
    <property type="project" value="UniProtKB-SubCell"/>
</dbReference>
<dbReference type="GO" id="GO:0005819">
    <property type="term" value="C:spindle"/>
    <property type="evidence" value="ECO:0000314"/>
    <property type="project" value="UniProtKB"/>
</dbReference>
<dbReference type="GO" id="GO:0005524">
    <property type="term" value="F:ATP binding"/>
    <property type="evidence" value="ECO:0000314"/>
    <property type="project" value="UniProtKB"/>
</dbReference>
<dbReference type="GO" id="GO:0008140">
    <property type="term" value="F:cAMP response element binding protein binding"/>
    <property type="evidence" value="ECO:0000304"/>
    <property type="project" value="ParkinsonsUK-UCL"/>
</dbReference>
<dbReference type="GO" id="GO:0042802">
    <property type="term" value="F:identical protein binding"/>
    <property type="evidence" value="ECO:0000353"/>
    <property type="project" value="IntAct"/>
</dbReference>
<dbReference type="GO" id="GO:0043522">
    <property type="term" value="F:leucine zipper domain binding"/>
    <property type="evidence" value="ECO:0000353"/>
    <property type="project" value="UniProtKB"/>
</dbReference>
<dbReference type="GO" id="GO:0042803">
    <property type="term" value="F:protein homodimerization activity"/>
    <property type="evidence" value="ECO:0000314"/>
    <property type="project" value="UniProtKB"/>
</dbReference>
<dbReference type="GO" id="GO:0004672">
    <property type="term" value="F:protein kinase activity"/>
    <property type="evidence" value="ECO:0000314"/>
    <property type="project" value="UniProtKB"/>
</dbReference>
<dbReference type="GO" id="GO:0106310">
    <property type="term" value="F:protein serine kinase activity"/>
    <property type="evidence" value="ECO:0007669"/>
    <property type="project" value="RHEA"/>
</dbReference>
<dbReference type="GO" id="GO:0004674">
    <property type="term" value="F:protein serine/threonine kinase activity"/>
    <property type="evidence" value="ECO:0000314"/>
    <property type="project" value="UniProtKB"/>
</dbReference>
<dbReference type="GO" id="GO:0031267">
    <property type="term" value="F:small GTPase binding"/>
    <property type="evidence" value="ECO:0000314"/>
    <property type="project" value="UniProtKB"/>
</dbReference>
<dbReference type="GO" id="GO:0006915">
    <property type="term" value="P:apoptotic process"/>
    <property type="evidence" value="ECO:0000314"/>
    <property type="project" value="UniProtKB"/>
</dbReference>
<dbReference type="GO" id="GO:0097190">
    <property type="term" value="P:apoptotic signaling pathway"/>
    <property type="evidence" value="ECO:0007669"/>
    <property type="project" value="Ensembl"/>
</dbReference>
<dbReference type="GO" id="GO:0071346">
    <property type="term" value="P:cellular response to type II interferon"/>
    <property type="evidence" value="ECO:0000314"/>
    <property type="project" value="UniProtKB"/>
</dbReference>
<dbReference type="GO" id="GO:0006325">
    <property type="term" value="P:chromatin organization"/>
    <property type="evidence" value="ECO:0007669"/>
    <property type="project" value="UniProtKB-KW"/>
</dbReference>
<dbReference type="GO" id="GO:0035556">
    <property type="term" value="P:intracellular signal transduction"/>
    <property type="evidence" value="ECO:0000314"/>
    <property type="project" value="UniProtKB"/>
</dbReference>
<dbReference type="GO" id="GO:0017148">
    <property type="term" value="P:negative regulation of translation"/>
    <property type="evidence" value="ECO:0000314"/>
    <property type="project" value="UniProtKB"/>
</dbReference>
<dbReference type="GO" id="GO:0043065">
    <property type="term" value="P:positive regulation of apoptotic process"/>
    <property type="evidence" value="ECO:0000314"/>
    <property type="project" value="UniProtKB"/>
</dbReference>
<dbReference type="GO" id="GO:0090263">
    <property type="term" value="P:positive regulation of canonical Wnt signaling pathway"/>
    <property type="evidence" value="ECO:0000315"/>
    <property type="project" value="UniProtKB"/>
</dbReference>
<dbReference type="GO" id="GO:0030335">
    <property type="term" value="P:positive regulation of cell migration"/>
    <property type="evidence" value="ECO:0007669"/>
    <property type="project" value="Ensembl"/>
</dbReference>
<dbReference type="GO" id="GO:0046777">
    <property type="term" value="P:protein autophosphorylation"/>
    <property type="evidence" value="ECO:0000314"/>
    <property type="project" value="UniProtKB"/>
</dbReference>
<dbReference type="GO" id="GO:0006468">
    <property type="term" value="P:protein phosphorylation"/>
    <property type="evidence" value="ECO:0000314"/>
    <property type="project" value="UniProtKB"/>
</dbReference>
<dbReference type="GO" id="GO:0032956">
    <property type="term" value="P:regulation of actin cytoskeleton organization"/>
    <property type="evidence" value="ECO:0000314"/>
    <property type="project" value="UniProtKB"/>
</dbReference>
<dbReference type="GO" id="GO:0042981">
    <property type="term" value="P:regulation of apoptotic process"/>
    <property type="evidence" value="ECO:0000304"/>
    <property type="project" value="UniProtKB"/>
</dbReference>
<dbReference type="GO" id="GO:0010506">
    <property type="term" value="P:regulation of autophagy"/>
    <property type="evidence" value="ECO:0000304"/>
    <property type="project" value="UniProtKB"/>
</dbReference>
<dbReference type="GO" id="GO:2000145">
    <property type="term" value="P:regulation of cell motility"/>
    <property type="evidence" value="ECO:0000304"/>
    <property type="project" value="UniProtKB"/>
</dbReference>
<dbReference type="GO" id="GO:0008360">
    <property type="term" value="P:regulation of cell shape"/>
    <property type="evidence" value="ECO:0007669"/>
    <property type="project" value="Ensembl"/>
</dbReference>
<dbReference type="GO" id="GO:0006355">
    <property type="term" value="P:regulation of DNA-templated transcription"/>
    <property type="evidence" value="ECO:0000304"/>
    <property type="project" value="UniProtKB"/>
</dbReference>
<dbReference type="GO" id="GO:0051893">
    <property type="term" value="P:regulation of focal adhesion assembly"/>
    <property type="evidence" value="ECO:0000314"/>
    <property type="project" value="UniProtKB"/>
</dbReference>
<dbReference type="GO" id="GO:0007346">
    <property type="term" value="P:regulation of mitotic cell cycle"/>
    <property type="evidence" value="ECO:0000315"/>
    <property type="project" value="UniProtKB"/>
</dbReference>
<dbReference type="GO" id="GO:0007088">
    <property type="term" value="P:regulation of mitotic nuclear division"/>
    <property type="evidence" value="ECO:0000304"/>
    <property type="project" value="UniProtKB"/>
</dbReference>
<dbReference type="GO" id="GO:0043519">
    <property type="term" value="P:regulation of myosin II filament organization"/>
    <property type="evidence" value="ECO:0007669"/>
    <property type="project" value="Ensembl"/>
</dbReference>
<dbReference type="GO" id="GO:0006940">
    <property type="term" value="P:regulation of smooth muscle contraction"/>
    <property type="evidence" value="ECO:0000304"/>
    <property type="project" value="UniProtKB"/>
</dbReference>
<dbReference type="CDD" id="cd14105">
    <property type="entry name" value="STKc_DAPK"/>
    <property type="match status" value="1"/>
</dbReference>
<dbReference type="FunFam" id="3.30.200.20:FF:000110">
    <property type="entry name" value="Death-associated kinase 3, isoform CRA_a"/>
    <property type="match status" value="1"/>
</dbReference>
<dbReference type="FunFam" id="1.10.510.10:FF:000250">
    <property type="entry name" value="Death-associated protein kinase 3"/>
    <property type="match status" value="1"/>
</dbReference>
<dbReference type="Gene3D" id="3.30.200.20">
    <property type="entry name" value="Phosphorylase Kinase, domain 1"/>
    <property type="match status" value="1"/>
</dbReference>
<dbReference type="Gene3D" id="1.10.510.10">
    <property type="entry name" value="Transferase(Phosphotransferase) domain 1"/>
    <property type="match status" value="1"/>
</dbReference>
<dbReference type="InterPro" id="IPR042870">
    <property type="entry name" value="DAPK3_STKc"/>
</dbReference>
<dbReference type="InterPro" id="IPR011009">
    <property type="entry name" value="Kinase-like_dom_sf"/>
</dbReference>
<dbReference type="InterPro" id="IPR000719">
    <property type="entry name" value="Prot_kinase_dom"/>
</dbReference>
<dbReference type="InterPro" id="IPR017441">
    <property type="entry name" value="Protein_kinase_ATP_BS"/>
</dbReference>
<dbReference type="InterPro" id="IPR008271">
    <property type="entry name" value="Ser/Thr_kinase_AS"/>
</dbReference>
<dbReference type="PANTHER" id="PTHR24342:SF18">
    <property type="entry name" value="DEATH-ASSOCIATED PROTEIN KINASE 3"/>
    <property type="match status" value="1"/>
</dbReference>
<dbReference type="PANTHER" id="PTHR24342">
    <property type="entry name" value="SERINE/THREONINE-PROTEIN KINASE 17"/>
    <property type="match status" value="1"/>
</dbReference>
<dbReference type="Pfam" id="PF00069">
    <property type="entry name" value="Pkinase"/>
    <property type="match status" value="1"/>
</dbReference>
<dbReference type="SMART" id="SM00220">
    <property type="entry name" value="S_TKc"/>
    <property type="match status" value="1"/>
</dbReference>
<dbReference type="SUPFAM" id="SSF56112">
    <property type="entry name" value="Protein kinase-like (PK-like)"/>
    <property type="match status" value="1"/>
</dbReference>
<dbReference type="PROSITE" id="PS00107">
    <property type="entry name" value="PROTEIN_KINASE_ATP"/>
    <property type="match status" value="1"/>
</dbReference>
<dbReference type="PROSITE" id="PS50011">
    <property type="entry name" value="PROTEIN_KINASE_DOM"/>
    <property type="match status" value="1"/>
</dbReference>
<dbReference type="PROSITE" id="PS00108">
    <property type="entry name" value="PROTEIN_KINASE_ST"/>
    <property type="match status" value="1"/>
</dbReference>
<reference evidence="32" key="1">
    <citation type="journal article" date="1998" name="Mol. Cell. Biol.">
        <title>ZIP kinase, a novel serine/threonine kinase which mediates apoptosis.</title>
        <authorList>
            <person name="Kawai T."/>
            <person name="Matsumoto M."/>
            <person name="Takeda K."/>
            <person name="Sanjo H."/>
            <person name="Akira S."/>
        </authorList>
    </citation>
    <scope>NUCLEOTIDE SEQUENCE [MRNA]</scope>
</reference>
<reference evidence="32" key="2">
    <citation type="journal article" date="1999" name="FEBS Lett.">
        <title>ZIP kinase identified as a novel myosin regulatory light chain kinase in HeLa cells.</title>
        <authorList>
            <person name="Murata-Hori M."/>
            <person name="Suizu F."/>
            <person name="Iwasaki T."/>
            <person name="Kikuchi A."/>
            <person name="Hosoya H."/>
        </authorList>
    </citation>
    <scope>NUCLEOTIDE SEQUENCE [MRNA]</scope>
    <scope>FUNCTION</scope>
    <scope>CATALYTIC ACTIVITY</scope>
    <scope>COFACTOR</scope>
    <source>
        <tissue>Cervix carcinoma</tissue>
    </source>
</reference>
<reference key="3">
    <citation type="journal article" date="2004" name="Nat. Genet.">
        <title>Complete sequencing and characterization of 21,243 full-length human cDNAs.</title>
        <authorList>
            <person name="Ota T."/>
            <person name="Suzuki Y."/>
            <person name="Nishikawa T."/>
            <person name="Otsuki T."/>
            <person name="Sugiyama T."/>
            <person name="Irie R."/>
            <person name="Wakamatsu A."/>
            <person name="Hayashi K."/>
            <person name="Sato H."/>
            <person name="Nagai K."/>
            <person name="Kimura K."/>
            <person name="Makita H."/>
            <person name="Sekine M."/>
            <person name="Obayashi M."/>
            <person name="Nishi T."/>
            <person name="Shibahara T."/>
            <person name="Tanaka T."/>
            <person name="Ishii S."/>
            <person name="Yamamoto J."/>
            <person name="Saito K."/>
            <person name="Kawai Y."/>
            <person name="Isono Y."/>
            <person name="Nakamura Y."/>
            <person name="Nagahari K."/>
            <person name="Murakami K."/>
            <person name="Yasuda T."/>
            <person name="Iwayanagi T."/>
            <person name="Wagatsuma M."/>
            <person name="Shiratori A."/>
            <person name="Sudo H."/>
            <person name="Hosoiri T."/>
            <person name="Kaku Y."/>
            <person name="Kodaira H."/>
            <person name="Kondo H."/>
            <person name="Sugawara M."/>
            <person name="Takahashi M."/>
            <person name="Kanda K."/>
            <person name="Yokoi T."/>
            <person name="Furuya T."/>
            <person name="Kikkawa E."/>
            <person name="Omura Y."/>
            <person name="Abe K."/>
            <person name="Kamihara K."/>
            <person name="Katsuta N."/>
            <person name="Sato K."/>
            <person name="Tanikawa M."/>
            <person name="Yamazaki M."/>
            <person name="Ninomiya K."/>
            <person name="Ishibashi T."/>
            <person name="Yamashita H."/>
            <person name="Murakawa K."/>
            <person name="Fujimori K."/>
            <person name="Tanai H."/>
            <person name="Kimata M."/>
            <person name="Watanabe M."/>
            <person name="Hiraoka S."/>
            <person name="Chiba Y."/>
            <person name="Ishida S."/>
            <person name="Ono Y."/>
            <person name="Takiguchi S."/>
            <person name="Watanabe S."/>
            <person name="Yosida M."/>
            <person name="Hotuta T."/>
            <person name="Kusano J."/>
            <person name="Kanehori K."/>
            <person name="Takahashi-Fujii A."/>
            <person name="Hara H."/>
            <person name="Tanase T.-O."/>
            <person name="Nomura Y."/>
            <person name="Togiya S."/>
            <person name="Komai F."/>
            <person name="Hara R."/>
            <person name="Takeuchi K."/>
            <person name="Arita M."/>
            <person name="Imose N."/>
            <person name="Musashino K."/>
            <person name="Yuuki H."/>
            <person name="Oshima A."/>
            <person name="Sasaki N."/>
            <person name="Aotsuka S."/>
            <person name="Yoshikawa Y."/>
            <person name="Matsunawa H."/>
            <person name="Ichihara T."/>
            <person name="Shiohata N."/>
            <person name="Sano S."/>
            <person name="Moriya S."/>
            <person name="Momiyama H."/>
            <person name="Satoh N."/>
            <person name="Takami S."/>
            <person name="Terashima Y."/>
            <person name="Suzuki O."/>
            <person name="Nakagawa S."/>
            <person name="Senoh A."/>
            <person name="Mizoguchi H."/>
            <person name="Goto Y."/>
            <person name="Shimizu F."/>
            <person name="Wakebe H."/>
            <person name="Hishigaki H."/>
            <person name="Watanabe T."/>
            <person name="Sugiyama A."/>
            <person name="Takemoto M."/>
            <person name="Kawakami B."/>
            <person name="Yamazaki M."/>
            <person name="Watanabe K."/>
            <person name="Kumagai A."/>
            <person name="Itakura S."/>
            <person name="Fukuzumi Y."/>
            <person name="Fujimori Y."/>
            <person name="Komiyama M."/>
            <person name="Tashiro H."/>
            <person name="Tanigami A."/>
            <person name="Fujiwara T."/>
            <person name="Ono T."/>
            <person name="Yamada K."/>
            <person name="Fujii Y."/>
            <person name="Ozaki K."/>
            <person name="Hirao M."/>
            <person name="Ohmori Y."/>
            <person name="Kawabata A."/>
            <person name="Hikiji T."/>
            <person name="Kobatake N."/>
            <person name="Inagaki H."/>
            <person name="Ikema Y."/>
            <person name="Okamoto S."/>
            <person name="Okitani R."/>
            <person name="Kawakami T."/>
            <person name="Noguchi S."/>
            <person name="Itoh T."/>
            <person name="Shigeta K."/>
            <person name="Senba T."/>
            <person name="Matsumura K."/>
            <person name="Nakajima Y."/>
            <person name="Mizuno T."/>
            <person name="Morinaga M."/>
            <person name="Sasaki M."/>
            <person name="Togashi T."/>
            <person name="Oyama M."/>
            <person name="Hata H."/>
            <person name="Watanabe M."/>
            <person name="Komatsu T."/>
            <person name="Mizushima-Sugano J."/>
            <person name="Satoh T."/>
            <person name="Shirai Y."/>
            <person name="Takahashi Y."/>
            <person name="Nakagawa K."/>
            <person name="Okumura K."/>
            <person name="Nagase T."/>
            <person name="Nomura N."/>
            <person name="Kikuchi H."/>
            <person name="Masuho Y."/>
            <person name="Yamashita R."/>
            <person name="Nakai K."/>
            <person name="Yada T."/>
            <person name="Nakamura Y."/>
            <person name="Ohara O."/>
            <person name="Isogai T."/>
            <person name="Sugano S."/>
        </authorList>
    </citation>
    <scope>NUCLEOTIDE SEQUENCE [LARGE SCALE MRNA]</scope>
</reference>
<reference key="4">
    <citation type="journal article" date="2004" name="Genome Res.">
        <title>The status, quality, and expansion of the NIH full-length cDNA project: the Mammalian Gene Collection (MGC).</title>
        <authorList>
            <consortium name="The MGC Project Team"/>
        </authorList>
    </citation>
    <scope>NUCLEOTIDE SEQUENCE [LARGE SCALE MRNA]</scope>
    <source>
        <tissue>Brain</tissue>
    </source>
</reference>
<reference key="5">
    <citation type="journal article" date="2006" name="Arch. Biochem. Biophys.">
        <title>Novel ZIP kinase isoform lacks leucine zipper.</title>
        <authorList>
            <person name="Takamoto N."/>
            <person name="Komatsu S."/>
            <person name="Komaba S."/>
            <person name="Niiro N."/>
            <person name="Ikebe M."/>
        </authorList>
    </citation>
    <scope>NUCLEOTIDE SEQUENCE [MRNA] OF 165-454 (ISOFORM 2)</scope>
    <scope>ALTERNATIVE SPLICING</scope>
    <scope>FUNCTION IN PHOSPHORYLATION OF MYOSIN; PPP1R12A AND MYL12B</scope>
    <scope>CATALYTIC ACTIVITY</scope>
    <scope>SUBCELLULAR LOCATION</scope>
    <scope>BIOPHYSICOCHEMICAL PROPERTIES</scope>
    <scope>INTERACTION WITH PPP1R12A AND MYOSIN</scope>
    <scope>AUTOPHOSPHORYLATION</scope>
    <scope>TISSUE SPECIFICITY</scope>
    <source>
        <tissue>Urinary bladder</tissue>
    </source>
</reference>
<reference key="6">
    <citation type="journal article" date="2001" name="J. Biol. Chem.">
        <title>Zipper-interacting protein kinase induces Ca(2+)-free smooth muscle contraction via myosin light chain phosphorylation.</title>
        <authorList>
            <person name="Niiro N."/>
            <person name="Ikebe M."/>
        </authorList>
    </citation>
    <scope>FUNCTION IN PHOSPHORYLATION OF MUSCLE MYL12B</scope>
    <scope>CATALYTIC ACTIVITY</scope>
</reference>
<reference key="7">
    <citation type="journal article" date="2001" name="Oncogene">
        <title>HeLa ZIP kinase induces diphosphorylation of myosin II regulatory light chain and reorganization of actin filaments in nonmuscle cells.</title>
        <authorList>
            <person name="Murata-Hori M."/>
            <person name="Fukuta Y."/>
            <person name="Ueda K."/>
            <person name="Iwasaki T."/>
            <person name="Hosoya H."/>
        </authorList>
    </citation>
    <scope>FUNCTION IN PHOSPHORYLATION OF NON-MUSCLE MYL12B</scope>
    <scope>CATALYTIC ACTIVITY</scope>
</reference>
<reference evidence="32" key="8">
    <citation type="journal article" date="2003" name="Mol. Cell. Biol.">
        <title>ZIP kinase triggers apoptosis from nuclear PML oncogenic domains.</title>
        <authorList>
            <person name="Kawai T."/>
            <person name="Akira S."/>
            <person name="Reed J.C."/>
        </authorList>
    </citation>
    <scope>FUNCTION IN APOPTOSIS</scope>
    <scope>INTERACTION WITH DAXX AND PAWR</scope>
</reference>
<reference key="9">
    <citation type="journal article" date="2004" name="J. Biol. Chem.">
        <title>Identification and characterization of zipper-interacting protein kinase as the unique vascular smooth muscle myosin phosphatase-associated kinase.</title>
        <authorList>
            <person name="Endo A."/>
            <person name="Surks H.K."/>
            <person name="Mochizuki S."/>
            <person name="Mochizuki N."/>
            <person name="Mendelsohn M.E."/>
        </authorList>
    </citation>
    <scope>INTERACTION WITH PPP1R12A</scope>
    <scope>TISSUE SPECIFICITY</scope>
</reference>
<reference key="10">
    <citation type="journal article" date="2004" name="J. Cell Biol.">
        <title>ZIP kinase is responsible for the phosphorylation of myosin II and necessary for cell motility in mammalian fibroblasts.</title>
        <authorList>
            <person name="Komatsu S."/>
            <person name="Ikebe M."/>
        </authorList>
    </citation>
    <scope>FUNCTION IN PHOSPHORYLATION OF MYL12B</scope>
    <scope>CATALYTIC ACTIVITY</scope>
</reference>
<reference key="11">
    <citation type="journal article" date="2004" name="Mol. Cell. Biol.">
        <title>Death-associated protein kinase phosphorylates ZIP kinase, forming a unique kinase hierarchy to activate its cell death functions.</title>
        <authorList>
            <person name="Shani G."/>
            <person name="Marash L."/>
            <person name="Gozuacik D."/>
            <person name="Bialik S."/>
            <person name="Teitelbaum L."/>
            <person name="Shohat G."/>
            <person name="Kimchi A."/>
        </authorList>
    </citation>
    <scope>FUNCTION</scope>
    <scope>PHOSPHORYLATION AT THR-299; SER-309; SER-311; SER-312; SER-318 AND SER-326</scope>
    <scope>PHOSPHORYLATION BY DAPK1</scope>
    <scope>SUBCELLULAR LOCATION</scope>
</reference>
<reference key="12">
    <citation type="journal article" date="2005" name="Int. Immunol.">
        <title>Physical and functional interactions between STAT3 and ZIP kinase.</title>
        <authorList>
            <person name="Sato N."/>
            <person name="Kawai T."/>
            <person name="Sugiyama K."/>
            <person name="Muromoto R."/>
            <person name="Imoto S."/>
            <person name="Sekine Y."/>
            <person name="Ishida M."/>
            <person name="Akira S."/>
            <person name="Matsuda T."/>
        </authorList>
    </citation>
    <scope>INTERACTION WITH STAT3</scope>
</reference>
<reference key="13">
    <citation type="journal article" date="2005" name="Int. J. Androl.">
        <title>TCP10L is expressed specifically in spermatogenic cells and binds to death associated protein kinase-3.</title>
        <authorList>
            <person name="Yu H."/>
            <person name="Jiang D."/>
            <person name="Guo Z."/>
            <person name="Saiyin H."/>
            <person name="Guo J."/>
            <person name="Wang X."/>
            <person name="Yu L."/>
        </authorList>
    </citation>
    <scope>INTERACTION WITH TCP10L</scope>
    <scope>SUBCELLULAR LOCATION</scope>
</reference>
<reference key="14">
    <citation type="journal article" date="2005" name="J. Biol. Chem.">
        <title>Regulation of zipper-interacting protein kinase activity in vitro and in vivo by multisite phosphorylation.</title>
        <authorList>
            <person name="Graves P.R."/>
            <person name="Winkfield K.M."/>
            <person name="Haystead T.A."/>
        </authorList>
    </citation>
    <scope>PHOSPHORYLATION AT THR-180; THR-225; THR-265; THR-299; THR-306 AND SER-311</scope>
    <scope>ACTIVITY REGULATION</scope>
    <scope>SUBCELLULAR LOCATION</scope>
    <scope>MUTAGENESIS OF THR-299; 299-THR-THR-300; VAL-427; VAL-434 AND LEU-441</scope>
</reference>
<reference key="15">
    <citation type="journal article" date="2006" name="Annu. Rev. Biochem.">
        <title>The death-associated protein kinases: structure, function, and beyond.</title>
        <authorList>
            <person name="Bialik S."/>
            <person name="Kimchi A."/>
        </authorList>
    </citation>
    <scope>REVIEW ON FUNCTION</scope>
</reference>
<reference key="16">
    <citation type="journal article" date="2007" name="J. Biol. Chem.">
        <title>ROCK1 phosphorylates and activates zipper-interacting protein kinase.</title>
        <authorList>
            <person name="Hagerty L."/>
            <person name="Weitzel D.H."/>
            <person name="Chambers J."/>
            <person name="Fortner C.N."/>
            <person name="Brush M.H."/>
            <person name="Loiselle D."/>
            <person name="Hosoya H."/>
            <person name="Haystead T.A."/>
        </authorList>
    </citation>
    <scope>FUNCTION</scope>
    <scope>ACTIVITY REGULATION</scope>
    <scope>AUTOPHOSPHORYLATION</scope>
    <scope>PHOSPHORYLATION AT THR-180; THR-265 AND THR-299</scope>
    <scope>MUTAGENESIS OF LYS-42; ASP-161; THR-225; THR-265 AND THR-299</scope>
</reference>
<reference key="17">
    <citation type="journal article" date="2007" name="PLoS Genet.">
        <title>ZIPK: a unique case of murine-specific divergence of a conserved vertebrate gene.</title>
        <authorList>
            <person name="Shoval Y."/>
            <person name="Pietrokovski S."/>
            <person name="Kimchi A."/>
        </authorList>
    </citation>
    <scope>SUBCELLULAR LOCATION</scope>
    <scope>ABSENCE OF INTERACTION WITH PARW</scope>
</reference>
<reference key="18">
    <citation type="journal article" date="2007" name="Signal Transduct.">
        <title>Dlk/ZIP kinase, a novel Ser/Thr-specific protein kinase with multiple functions.</title>
        <authorList>
            <person name="Scheidtmann K.H."/>
        </authorList>
    </citation>
    <scope>REVIEW ON FUNCTION</scope>
</reference>
<reference key="19">
    <citation type="journal article" date="2008" name="Mol. Cell">
        <title>DAPK-ZIPK-L13a axis constitutes a negative-feedback module regulating inflammatory gene expression.</title>
        <authorList>
            <person name="Mukhopadhyay R."/>
            <person name="Ray P.S."/>
            <person name="Arif A."/>
            <person name="Brady A.K."/>
            <person name="Kinter M."/>
            <person name="Fox P.L."/>
        </authorList>
    </citation>
    <scope>FUNCTION IN PHOSPHORYLATION OF RPL13A</scope>
    <scope>CATALYTIC ACTIVITY</scope>
</reference>
<reference key="20">
    <citation type="journal article" date="2008" name="Oncogene">
        <title>ZIP kinase plays a crucial role in androgen receptor-mediated transcription.</title>
        <authorList>
            <person name="Leister P."/>
            <person name="Felten A."/>
            <person name="Chasan A.I."/>
            <person name="Scheidtmann K.H."/>
        </authorList>
    </citation>
    <scope>FUNCTION IN ANDROGEN RECEPTOR-MEDIATED TRANSCRIPTION</scope>
</reference>
<reference key="21">
    <citation type="journal article" date="2011" name="Cancer Res.">
        <title>Cancer-associated loss-of-function mutations implicate DAPK3 as a tumor-suppressing kinase.</title>
        <authorList>
            <person name="Brognard J."/>
            <person name="Zhang Y.W."/>
            <person name="Puto L.A."/>
            <person name="Hunter T."/>
        </authorList>
    </citation>
    <scope>FUNCTION AS TUMOR SUPPRESSOR</scope>
    <scope>CHARACTERIZATION OF VARIANTS MET-112; ASN-161 AND SER-216</scope>
    <scope>MUTAGENESIS OF THR-180</scope>
    <scope>SELF-ASSOCIATION</scope>
</reference>
<reference key="22">
    <citation type="journal article" date="2011" name="Cell. Signal.">
        <title>Phosphorylation-dependent control of ZIPK nuclear import is species specific.</title>
        <authorList>
            <person name="Weitzel D.H."/>
            <person name="Chambers J."/>
            <person name="Haystead T.A."/>
        </authorList>
    </citation>
    <scope>PHOSPHORYLATION AT THR-299</scope>
    <scope>SUBCELLULAR LOCATION</scope>
    <scope>MUTAGENESIS OF 294-ARG-ARG-295</scope>
</reference>
<reference key="23">
    <citation type="journal article" date="2011" name="EMBO J.">
        <title>Atg1-mediated myosin II activation regulates autophagosome formation during starvation-induced autophagy.</title>
        <authorList>
            <person name="Tang H.W."/>
            <person name="Wang Y.B."/>
            <person name="Wang S.L."/>
            <person name="Wu M.H."/>
            <person name="Lin S.Y."/>
            <person name="Chen G.C."/>
        </authorList>
    </citation>
    <scope>FUNCTION IN REGULATION OF AUTOPHAGY</scope>
    <scope>INTERACTION WITH ULK1</scope>
</reference>
<reference key="24">
    <citation type="journal article" date="2011" name="J. Biol. Chem.">
        <title>Zipper-interacting protein kinase (ZIPK) modulates canonical Wnt/beta-catenin signaling through interaction with Nemo-like kinase and T-cell factor 4 (NLK/TCF4).</title>
        <authorList>
            <person name="Togi S."/>
            <person name="Ikeda O."/>
            <person name="Kamitani S."/>
            <person name="Nakasuji M."/>
            <person name="Sekine Y."/>
            <person name="Muromoto R."/>
            <person name="Nanbo A."/>
            <person name="Oritani K."/>
            <person name="Kawai T."/>
            <person name="Akira S."/>
            <person name="Matsuda T."/>
        </authorList>
    </citation>
    <scope>FUNCTION</scope>
    <scope>INTERACTION WITH NLK</scope>
</reference>
<reference key="25">
    <citation type="journal article" date="2011" name="PLoS ONE">
        <title>New modularity of DAP-kinases: alternative splicing of the DRP-1 gene produces a ZIPk-like isoform.</title>
        <authorList>
            <person name="Shoval Y."/>
            <person name="Berissi H."/>
            <person name="Kimchi A."/>
            <person name="Pietrokovski S."/>
        </authorList>
    </citation>
    <scope>FUNCTION</scope>
    <scope>INTERACTION WITH ATF4</scope>
</reference>
<reference key="26">
    <citation type="journal article" date="2013" name="Biochem. Biophys. Res. Commun.">
        <title>Interaction of RhoD and ZIP kinase modulates actin filament assembly and focal adhesion dynamics.</title>
        <authorList>
            <person name="Nehru V."/>
            <person name="Almeida F.N."/>
            <person name="Aspenstrom P."/>
        </authorList>
    </citation>
    <scope>FUNCTION IN REORGANIZATION OF ACTIN CYTOSKELETON</scope>
    <scope>INTERACTION WITH RHOD</scope>
</reference>
<reference key="27">
    <citation type="journal article" date="2013" name="J. Proteome Res.">
        <title>Toward a comprehensive characterization of a human cancer cell phosphoproteome.</title>
        <authorList>
            <person name="Zhou H."/>
            <person name="Di Palma S."/>
            <person name="Preisinger C."/>
            <person name="Peng M."/>
            <person name="Polat A.N."/>
            <person name="Heck A.J."/>
            <person name="Mohammed S."/>
        </authorList>
    </citation>
    <scope>PHOSPHORYLATION [LARGE SCALE ANALYSIS] AT SER-312</scope>
    <scope>IDENTIFICATION BY MASS SPECTROMETRY [LARGE SCALE ANALYSIS]</scope>
    <source>
        <tissue>Cervix carcinoma</tissue>
        <tissue>Erythroleukemia</tissue>
    </source>
</reference>
<reference key="28">
    <citation type="journal article" date="2024" name="FEBS J.">
        <title>Leucine zipper protein 1 (LUZP1) regulates the constriction velocity of the contractile ring during cytokinesis.</title>
        <authorList>
            <person name="Hyodo T."/>
            <person name="Asano-Inami E."/>
            <person name="Ito S."/>
            <person name="Sugiyama M."/>
            <person name="Nawa A."/>
            <person name="Rahman M.L."/>
            <person name="Hasan M.N."/>
            <person name="Mihara Y."/>
            <person name="Lam V.Q."/>
            <person name="Karnan S."/>
            <person name="Ota A."/>
            <person name="Tsuzuki S."/>
            <person name="Hamaguchi M."/>
            <person name="Hosokawa Y."/>
            <person name="Konishi H."/>
        </authorList>
    </citation>
    <scope>FUNCTION</scope>
    <scope>INTERACTION WITH LUZP1</scope>
    <scope>SUBCELLULAR LOCATION</scope>
</reference>
<reference key="29">
    <citation type="submission" date="2006-06" db="PDB data bank">
        <title>Crystal structure of human ZIP kinase.</title>
        <authorList>
            <person name="Kursula P."/>
            <person name="Vahokoski J."/>
            <person name="Wilmanns M."/>
        </authorList>
    </citation>
    <scope>X-RAY CRYSTALLOGRAPHY (3.1 ANGSTROMS) OF 1-277</scope>
</reference>
<reference evidence="33" key="30">
    <citation type="journal article" date="2008" name="EMBO J.">
        <title>Activation segment dimerization: a mechanism for kinase autophosphorylation of non-consensus sites.</title>
        <authorList>
            <person name="Pike A.C."/>
            <person name="Rellos P."/>
            <person name="Niesen F.H."/>
            <person name="Turnbull A."/>
            <person name="Oliver A.W."/>
            <person name="Parker S.A."/>
            <person name="Turk B.E."/>
            <person name="Pearl L.H."/>
            <person name="Knapp S."/>
        </authorList>
    </citation>
    <scope>X-RAY CRYSTALLOGRAPHY (2.0 ANGSTROMS) OF 9-289 IN COMPLEX WITH PYRIDONE-6</scope>
    <scope>ACTIVITY REGULATION</scope>
    <scope>SUBUNIT</scope>
    <scope>PHOSPHORYLATION AT SER-50 AND THR-265</scope>
</reference>
<reference key="31">
    <citation type="journal article" date="2007" name="Nature">
        <title>Patterns of somatic mutation in human cancer genomes.</title>
        <authorList>
            <person name="Greenman C."/>
            <person name="Stephens P."/>
            <person name="Smith R."/>
            <person name="Dalgliesh G.L."/>
            <person name="Hunter C."/>
            <person name="Bignell G."/>
            <person name="Davies H."/>
            <person name="Teague J."/>
            <person name="Butler A."/>
            <person name="Stevens C."/>
            <person name="Edkins S."/>
            <person name="O'Meara S."/>
            <person name="Vastrik I."/>
            <person name="Schmidt E.E."/>
            <person name="Avis T."/>
            <person name="Barthorpe S."/>
            <person name="Bhamra G."/>
            <person name="Buck G."/>
            <person name="Choudhury B."/>
            <person name="Clements J."/>
            <person name="Cole J."/>
            <person name="Dicks E."/>
            <person name="Forbes S."/>
            <person name="Gray K."/>
            <person name="Halliday K."/>
            <person name="Harrison R."/>
            <person name="Hills K."/>
            <person name="Hinton J."/>
            <person name="Jenkinson A."/>
            <person name="Jones D."/>
            <person name="Menzies A."/>
            <person name="Mironenko T."/>
            <person name="Perry J."/>
            <person name="Raine K."/>
            <person name="Richardson D."/>
            <person name="Shepherd R."/>
            <person name="Small A."/>
            <person name="Tofts C."/>
            <person name="Varian J."/>
            <person name="Webb T."/>
            <person name="West S."/>
            <person name="Widaa S."/>
            <person name="Yates A."/>
            <person name="Cahill D.P."/>
            <person name="Louis D.N."/>
            <person name="Goldstraw P."/>
            <person name="Nicholson A.G."/>
            <person name="Brasseur F."/>
            <person name="Looijenga L."/>
            <person name="Weber B.L."/>
            <person name="Chiew Y.-E."/>
            <person name="DeFazio A."/>
            <person name="Greaves M.F."/>
            <person name="Green A.R."/>
            <person name="Campbell P."/>
            <person name="Birney E."/>
            <person name="Easton D.F."/>
            <person name="Chenevix-Trench G."/>
            <person name="Tan M.-H."/>
            <person name="Khoo S.K."/>
            <person name="Teh B.T."/>
            <person name="Yuen S.T."/>
            <person name="Leung S.Y."/>
            <person name="Wooster R."/>
            <person name="Futreal P.A."/>
            <person name="Stratton M.R."/>
        </authorList>
    </citation>
    <scope>VARIANTS [LARGE SCALE ANALYSIS] MET-112; ASN-161 AND SER-216</scope>
</reference>
<protein>
    <recommendedName>
        <fullName>Death-associated protein kinase 3</fullName>
        <shortName>DAP kinase 3</shortName>
        <ecNumber evidence="5 6 7 9 15 21">2.7.11.1</ecNumber>
    </recommendedName>
    <alternativeName>
        <fullName>DAP-like kinase</fullName>
        <shortName>Dlk</shortName>
    </alternativeName>
    <alternativeName>
        <fullName>MYPT1 kinase</fullName>
    </alternativeName>
    <alternativeName>
        <fullName>Zipper-interacting protein kinase</fullName>
        <shortName>ZIP-kinase</shortName>
    </alternativeName>
</protein>
<feature type="chain" id="PRO_0000085914" description="Death-associated protein kinase 3">
    <location>
        <begin position="1"/>
        <end position="454"/>
    </location>
</feature>
<feature type="domain" description="Protein kinase" evidence="3">
    <location>
        <begin position="13"/>
        <end position="275"/>
    </location>
</feature>
<feature type="region of interest" description="Activation segment" evidence="2">
    <location>
        <begin position="161"/>
        <end position="204"/>
    </location>
</feature>
<feature type="region of interest" description="Leucine-zipper" evidence="31">
    <location>
        <begin position="427"/>
        <end position="441"/>
    </location>
</feature>
<feature type="active site" description="Proton acceptor" evidence="3 4">
    <location>
        <position position="139"/>
    </location>
</feature>
<feature type="binding site" evidence="3">
    <location>
        <begin position="19"/>
        <end position="27"/>
    </location>
    <ligand>
        <name>ATP</name>
        <dbReference type="ChEBI" id="CHEBI:30616"/>
    </ligand>
</feature>
<feature type="binding site" evidence="32">
    <location>
        <position position="42"/>
    </location>
    <ligand>
        <name>ATP</name>
        <dbReference type="ChEBI" id="CHEBI:30616"/>
    </ligand>
</feature>
<feature type="binding site" evidence="20 33">
    <location>
        <position position="94"/>
    </location>
    <ligand>
        <name>pyridone 6</name>
        <dbReference type="ChEBI" id="CHEBI:87103"/>
        <note>inhibitor</note>
    </ligand>
</feature>
<feature type="binding site" evidence="20 33">
    <location>
        <position position="96"/>
    </location>
    <ligand>
        <name>pyridone 6</name>
        <dbReference type="ChEBI" id="CHEBI:87103"/>
        <note>inhibitor</note>
    </ligand>
</feature>
<feature type="modified residue" description="Phosphoserine; by autocatalysis" evidence="20">
    <location>
        <position position="50"/>
    </location>
</feature>
<feature type="modified residue" description="Phosphothreonine" evidence="12 16">
    <location>
        <position position="180"/>
    </location>
</feature>
<feature type="modified residue" description="Phosphothreonine" evidence="12">
    <location>
        <position position="225"/>
    </location>
</feature>
<feature type="modified residue" description="Phosphothreonine; by autocatalysis and ROCK1" evidence="12 16 20">
    <location>
        <position position="265"/>
    </location>
</feature>
<feature type="modified residue" description="Phosphothreonine; by autocatalysis, DAPK1 and ROCK1" evidence="11 12 16 22">
    <location>
        <position position="299"/>
    </location>
</feature>
<feature type="modified residue" description="Phosphothreonine; by autocatalysis" evidence="12">
    <location>
        <position position="306"/>
    </location>
</feature>
<feature type="modified residue" description="Phosphoserine; by DAPK1" evidence="11">
    <location>
        <position position="309"/>
    </location>
</feature>
<feature type="modified residue" description="Phosphoserine; by autocatalysis and DAPK1" evidence="11 12">
    <location>
        <position position="311"/>
    </location>
</feature>
<feature type="modified residue" description="Phosphoserine; by DAPK1" evidence="11 34">
    <location>
        <position position="312"/>
    </location>
</feature>
<feature type="modified residue" description="Phosphoserine; by DAPK1" evidence="11">
    <location>
        <position position="318"/>
    </location>
</feature>
<feature type="modified residue" description="Phosphoserine; by DAPK1" evidence="11">
    <location>
        <position position="326"/>
    </location>
</feature>
<feature type="splice variant" id="VSP_042059" description="In isoform 2." evidence="29">
    <original>LPPNNSYADF</original>
    <variation>ASPIVAPVDA</variation>
    <location>
        <begin position="313"/>
        <end position="322"/>
    </location>
</feature>
<feature type="splice variant" id="VSP_042060" description="In isoform 2." evidence="29">
    <location>
        <begin position="323"/>
        <end position="454"/>
    </location>
</feature>
<feature type="sequence variant" id="VAR_040438" description="In a colorectal adenocarcinoma sample; somatic mutation; greatly reduces kinase activity, increases cell proliferation and cell survival." evidence="17 26">
    <original>T</original>
    <variation>M</variation>
    <location>
        <position position="112"/>
    </location>
</feature>
<feature type="sequence variant" id="VAR_040439" description="In an ovarian mucinous carcinoma sample; somatic mutation; greatly reduces kinase activity, increases cell proliferation and cell survival." evidence="17 26">
    <original>D</original>
    <variation>N</variation>
    <location>
        <position position="161"/>
    </location>
</feature>
<feature type="sequence variant" id="VAR_040440" description="In a lung neuroendocrine carcinoma sample; somatic mutation; greatly reduces kinase activity, increases cell proliferation, cell adhesion and cell survival." evidence="17 26">
    <original>P</original>
    <variation>S</variation>
    <location>
        <position position="216"/>
    </location>
</feature>
<feature type="mutagenesis site" description="Loss of kinase activity at low concentrations of ATP." evidence="16">
    <original>K</original>
    <variation>A</variation>
    <location>
        <position position="42"/>
    </location>
</feature>
<feature type="mutagenesis site" description="Loss of kinase activity." evidence="16">
    <original>D</original>
    <variation>A</variation>
    <location>
        <position position="161"/>
    </location>
</feature>
<feature type="mutagenesis site" description="Greatly reduced kinase activity." evidence="26">
    <original>T</original>
    <variation>A</variation>
    <location>
        <position position="180"/>
    </location>
</feature>
<feature type="mutagenesis site" description="Loss of kinase activity." evidence="16">
    <original>T</original>
    <variation>A</variation>
    <location>
        <position position="225"/>
    </location>
</feature>
<feature type="mutagenesis site" description="Loss of phosphorylation by ROCK1, catalytically inactive." evidence="16">
    <original>T</original>
    <variation>A</variation>
    <location>
        <position position="265"/>
    </location>
</feature>
<feature type="mutagenesis site" description="Cytoplasmic localization." evidence="22">
    <original>RR</original>
    <variation>AA</variation>
    <location>
        <begin position="294"/>
        <end position="295"/>
    </location>
</feature>
<feature type="mutagenesis site" description="Predominantly nuclear localization." evidence="12">
    <original>TT</original>
    <variation>AA</variation>
    <location>
        <begin position="299"/>
        <end position="300"/>
    </location>
</feature>
<feature type="mutagenesis site" description="Loss of phosphorylation by ROCK1." evidence="16">
    <original>T</original>
    <variation>A</variation>
    <location>
        <position position="299"/>
    </location>
</feature>
<feature type="mutagenesis site" description="Predominantly cytoplasmic localization; phosphomimetic." evidence="12">
    <original>T</original>
    <variation>D</variation>
    <location>
        <position position="299"/>
    </location>
</feature>
<feature type="mutagenesis site" description="Predominantly nuclear localization; when associated with A-434 and A-441." evidence="12">
    <original>V</original>
    <variation>A</variation>
    <location>
        <position position="427"/>
    </location>
</feature>
<feature type="mutagenesis site" description="Predominantly nuclear localization; when associated with A-427 and A-441." evidence="12">
    <original>V</original>
    <variation>A</variation>
    <location>
        <position position="434"/>
    </location>
</feature>
<feature type="mutagenesis site" description="Predominantly nuclear localization; when associated with A-427 and A-434." evidence="12">
    <original>L</original>
    <variation>A</variation>
    <location>
        <position position="441"/>
    </location>
</feature>
<feature type="helix" evidence="36">
    <location>
        <begin position="9"/>
        <end position="12"/>
    </location>
</feature>
<feature type="strand" evidence="36">
    <location>
        <begin position="13"/>
        <end position="21"/>
    </location>
</feature>
<feature type="strand" evidence="36">
    <location>
        <begin position="23"/>
        <end position="32"/>
    </location>
</feature>
<feature type="turn" evidence="36">
    <location>
        <begin position="33"/>
        <end position="35"/>
    </location>
</feature>
<feature type="strand" evidence="36">
    <location>
        <begin position="38"/>
        <end position="46"/>
    </location>
</feature>
<feature type="helix" evidence="35">
    <location>
        <begin position="49"/>
        <end position="51"/>
    </location>
</feature>
<feature type="strand" evidence="36">
    <location>
        <begin position="53"/>
        <end position="56"/>
    </location>
</feature>
<feature type="helix" evidence="36">
    <location>
        <begin position="58"/>
        <end position="70"/>
    </location>
</feature>
<feature type="strand" evidence="36">
    <location>
        <begin position="79"/>
        <end position="84"/>
    </location>
</feature>
<feature type="strand" evidence="36">
    <location>
        <begin position="86"/>
        <end position="94"/>
    </location>
</feature>
<feature type="helix" evidence="36">
    <location>
        <begin position="101"/>
        <end position="108"/>
    </location>
</feature>
<feature type="helix" evidence="36">
    <location>
        <begin position="113"/>
        <end position="132"/>
    </location>
</feature>
<feature type="helix" evidence="36">
    <location>
        <begin position="142"/>
        <end position="144"/>
    </location>
</feature>
<feature type="strand" evidence="36">
    <location>
        <begin position="145"/>
        <end position="148"/>
    </location>
</feature>
<feature type="strand" evidence="36">
    <location>
        <begin position="150"/>
        <end position="154"/>
    </location>
</feature>
<feature type="strand" evidence="36">
    <location>
        <begin position="157"/>
        <end position="159"/>
    </location>
</feature>
<feature type="helix" evidence="37">
    <location>
        <begin position="171"/>
        <end position="175"/>
    </location>
</feature>
<feature type="helix" evidence="38">
    <location>
        <begin position="176"/>
        <end position="178"/>
    </location>
</feature>
<feature type="helix" evidence="36">
    <location>
        <begin position="181"/>
        <end position="183"/>
    </location>
</feature>
<feature type="helix" evidence="36">
    <location>
        <begin position="186"/>
        <end position="189"/>
    </location>
</feature>
<feature type="helix" evidence="36">
    <location>
        <begin position="197"/>
        <end position="212"/>
    </location>
</feature>
<feature type="helix" evidence="36">
    <location>
        <begin position="222"/>
        <end position="230"/>
    </location>
</feature>
<feature type="helix" evidence="36">
    <location>
        <begin position="238"/>
        <end position="241"/>
    </location>
</feature>
<feature type="helix" evidence="36">
    <location>
        <begin position="246"/>
        <end position="253"/>
    </location>
</feature>
<feature type="helix" evidence="36">
    <location>
        <begin position="260"/>
        <end position="262"/>
    </location>
</feature>
<feature type="helix" evidence="36">
    <location>
        <begin position="266"/>
        <end position="271"/>
    </location>
</feature>
<feature type="helix" evidence="36">
    <location>
        <begin position="273"/>
        <end position="280"/>
    </location>
</feature>
<gene>
    <name type="primary">DAPK3</name>
    <name type="synonym">ZIPK</name>
</gene>
<keyword id="KW-0002">3D-structure</keyword>
<keyword id="KW-0010">Activator</keyword>
<keyword id="KW-0025">Alternative splicing</keyword>
<keyword id="KW-0053">Apoptosis</keyword>
<keyword id="KW-0067">ATP-binding</keyword>
<keyword id="KW-0137">Centromere</keyword>
<keyword id="KW-0156">Chromatin regulator</keyword>
<keyword id="KW-0158">Chromosome</keyword>
<keyword id="KW-0963">Cytoplasm</keyword>
<keyword id="KW-0206">Cytoskeleton</keyword>
<keyword id="KW-0418">Kinase</keyword>
<keyword id="KW-0547">Nucleotide-binding</keyword>
<keyword id="KW-0539">Nucleus</keyword>
<keyword id="KW-0597">Phosphoprotein</keyword>
<keyword id="KW-1267">Proteomics identification</keyword>
<keyword id="KW-1185">Reference proteome</keyword>
<keyword id="KW-0723">Serine/threonine-protein kinase</keyword>
<keyword id="KW-0804">Transcription</keyword>
<keyword id="KW-0805">Transcription regulation</keyword>
<keyword id="KW-0808">Transferase</keyword>
<keyword id="KW-0810">Translation regulation</keyword>
<keyword id="KW-0043">Tumor suppressor</keyword>
<evidence type="ECO:0000250" key="1">
    <source>
        <dbReference type="UniProtKB" id="O54784"/>
    </source>
</evidence>
<evidence type="ECO:0000250" key="2">
    <source>
        <dbReference type="UniProtKB" id="O96017"/>
    </source>
</evidence>
<evidence type="ECO:0000255" key="3">
    <source>
        <dbReference type="PROSITE-ProRule" id="PRU00159"/>
    </source>
</evidence>
<evidence type="ECO:0000255" key="4">
    <source>
        <dbReference type="PROSITE-ProRule" id="PRU10027"/>
    </source>
</evidence>
<evidence type="ECO:0000269" key="5">
    <source>
    </source>
</evidence>
<evidence type="ECO:0000269" key="6">
    <source>
    </source>
</evidence>
<evidence type="ECO:0000269" key="7">
    <source>
    </source>
</evidence>
<evidence type="ECO:0000269" key="8">
    <source>
    </source>
</evidence>
<evidence type="ECO:0000269" key="9">
    <source>
    </source>
</evidence>
<evidence type="ECO:0000269" key="10">
    <source>
    </source>
</evidence>
<evidence type="ECO:0000269" key="11">
    <source>
    </source>
</evidence>
<evidence type="ECO:0000269" key="12">
    <source>
    </source>
</evidence>
<evidence type="ECO:0000269" key="13">
    <source>
    </source>
</evidence>
<evidence type="ECO:0000269" key="14">
    <source>
    </source>
</evidence>
<evidence type="ECO:0000269" key="15">
    <source>
    </source>
</evidence>
<evidence type="ECO:0000269" key="16">
    <source>
    </source>
</evidence>
<evidence type="ECO:0000269" key="17">
    <source>
    </source>
</evidence>
<evidence type="ECO:0000269" key="18">
    <source>
    </source>
</evidence>
<evidence type="ECO:0000269" key="19">
    <source>
    </source>
</evidence>
<evidence type="ECO:0000269" key="20">
    <source>
    </source>
</evidence>
<evidence type="ECO:0000269" key="21">
    <source>
    </source>
</evidence>
<evidence type="ECO:0000269" key="22">
    <source>
    </source>
</evidence>
<evidence type="ECO:0000269" key="23">
    <source>
    </source>
</evidence>
<evidence type="ECO:0000269" key="24">
    <source>
    </source>
</evidence>
<evidence type="ECO:0000269" key="25">
    <source>
    </source>
</evidence>
<evidence type="ECO:0000269" key="26">
    <source>
    </source>
</evidence>
<evidence type="ECO:0000269" key="27">
    <source>
    </source>
</evidence>
<evidence type="ECO:0000269" key="28">
    <source>
    </source>
</evidence>
<evidence type="ECO:0000303" key="29">
    <source>
    </source>
</evidence>
<evidence type="ECO:0000303" key="30">
    <source>
    </source>
</evidence>
<evidence type="ECO:0000303" key="31">
    <source>
    </source>
</evidence>
<evidence type="ECO:0000305" key="32"/>
<evidence type="ECO:0007744" key="33">
    <source>
        <dbReference type="PDB" id="2J90"/>
    </source>
</evidence>
<evidence type="ECO:0007744" key="34">
    <source>
    </source>
</evidence>
<evidence type="ECO:0007829" key="35">
    <source>
        <dbReference type="PDB" id="2J90"/>
    </source>
</evidence>
<evidence type="ECO:0007829" key="36">
    <source>
        <dbReference type="PDB" id="3BHY"/>
    </source>
</evidence>
<evidence type="ECO:0007829" key="37">
    <source>
        <dbReference type="PDB" id="5A6N"/>
    </source>
</evidence>
<evidence type="ECO:0007829" key="38">
    <source>
        <dbReference type="PDB" id="5A6O"/>
    </source>
</evidence>
<sequence>MSTFRQEDVEDHYEMGEELGSGQFAIVRKCRQKGTGKEYAAKFIKKRRLSSSRRGVSREEIEREVNILREIRHPNIITLHDIFENKTDVVLILELVSGGELFDFLAEKESLTEDEATQFLKQILDGVHYLHSKRIAHFDLKPENIMLLDKNVPNPRIKLIDFGIAHKIEAGNEFKNIFGTPEFVAPEIVNYEPLGLEADMWSIGVITYILLSGASPFLGETKQETLTNISAVNYDFDEEYFSNTSELAKDFIRRLLVKDPKRRMTIAQSLEHSWIKAIRRRNVRGEDSGRKPERRRLKTTRLKEYTIKSHSSLPPNNSYADFERFSKVLEEAAAAEEGLRELQRSRRLCHEDVEALAAIYEEKEAWYREESDSLGQDLRRLRQELLKTEALKRQAQEEAKGALLGTSGLKRRFSRLENRYEALAKQVASEMRFVQDLVRALEQEKLQGVECGLR</sequence>